<keyword id="KW-0342">GTP-binding</keyword>
<keyword id="KW-0378">Hydrolase</keyword>
<keyword id="KW-0547">Nucleotide-binding</keyword>
<keyword id="KW-1185">Reference proteome</keyword>
<accession>O27096</accession>
<gene>
    <name evidence="1" type="primary">gch3</name>
    <name type="ordered locus">MTH_1017</name>
</gene>
<comment type="function">
    <text evidence="1">Catalyzes the formation of 2-amino-5-formylamino-6-ribofuranosylamino-4(3H)-pyrimidinone ribonucleotide monophosphate and inorganic phosphate from GTP. Also has an independent pyrophosphate phosphohydrolase activity.</text>
</comment>
<comment type="catalytic activity">
    <reaction evidence="1">
        <text>GTP + 3 H2O = 2-amino-5-formylamino-6-(5-phospho-D-ribosylamino)pyrimidin-4(3H)-one + 2 phosphate + 2 H(+)</text>
        <dbReference type="Rhea" id="RHEA:22468"/>
        <dbReference type="ChEBI" id="CHEBI:15377"/>
        <dbReference type="ChEBI" id="CHEBI:15378"/>
        <dbReference type="ChEBI" id="CHEBI:37565"/>
        <dbReference type="ChEBI" id="CHEBI:43474"/>
        <dbReference type="ChEBI" id="CHEBI:57258"/>
        <dbReference type="EC" id="3.5.4.29"/>
    </reaction>
</comment>
<comment type="similarity">
    <text evidence="1">Belongs to the archaeal-type GTP cyclohydrolase family.</text>
</comment>
<name>GCH3_METTH</name>
<organism>
    <name type="scientific">Methanothermobacter thermautotrophicus (strain ATCC 29096 / DSM 1053 / JCM 10044 / NBRC 100330 / Delta H)</name>
    <name type="common">Methanobacterium thermoautotrophicum</name>
    <dbReference type="NCBI Taxonomy" id="187420"/>
    <lineage>
        <taxon>Archaea</taxon>
        <taxon>Methanobacteriati</taxon>
        <taxon>Methanobacteriota</taxon>
        <taxon>Methanomada group</taxon>
        <taxon>Methanobacteria</taxon>
        <taxon>Methanobacteriales</taxon>
        <taxon>Methanobacteriaceae</taxon>
        <taxon>Methanothermobacter</taxon>
    </lineage>
</organism>
<sequence>MIQMTLIQIDNYGPWTVTPTPRNEADLQIMQAELYADLQRQFAARQGLVFFTRFDNMLAVTNGMDLEDHRRIQKSIGNRYPITVSMGVGAAETPYDAQRNASRALQSHGGAQSEERKEVLAIDGLVDEGYVQIAHIDINGITETMTDIVPAYDTSFIVNRVQHFLMKKLIKEGALLFFIGGDNFMSPCNGLEPQGLLRIINEIDDEINVALKAGIGKAPTAEKAANLADLALEEIRGGFTYDLVHVMKE</sequence>
<proteinExistence type="inferred from homology"/>
<evidence type="ECO:0000255" key="1">
    <source>
        <dbReference type="HAMAP-Rule" id="MF_00608"/>
    </source>
</evidence>
<feature type="chain" id="PRO_0000145756" description="GTP cyclohydrolase III">
    <location>
        <begin position="1"/>
        <end position="249"/>
    </location>
</feature>
<protein>
    <recommendedName>
        <fullName evidence="1">GTP cyclohydrolase III</fullName>
        <ecNumber evidence="1">3.5.4.29</ecNumber>
    </recommendedName>
</protein>
<reference key="1">
    <citation type="journal article" date="1997" name="J. Bacteriol.">
        <title>Complete genome sequence of Methanobacterium thermoautotrophicum deltaH: functional analysis and comparative genomics.</title>
        <authorList>
            <person name="Smith D.R."/>
            <person name="Doucette-Stamm L.A."/>
            <person name="Deloughery C."/>
            <person name="Lee H.-M."/>
            <person name="Dubois J."/>
            <person name="Aldredge T."/>
            <person name="Bashirzadeh R."/>
            <person name="Blakely D."/>
            <person name="Cook R."/>
            <person name="Gilbert K."/>
            <person name="Harrison D."/>
            <person name="Hoang L."/>
            <person name="Keagle P."/>
            <person name="Lumm W."/>
            <person name="Pothier B."/>
            <person name="Qiu D."/>
            <person name="Spadafora R."/>
            <person name="Vicare R."/>
            <person name="Wang Y."/>
            <person name="Wierzbowski J."/>
            <person name="Gibson R."/>
            <person name="Jiwani N."/>
            <person name="Caruso A."/>
            <person name="Bush D."/>
            <person name="Safer H."/>
            <person name="Patwell D."/>
            <person name="Prabhakar S."/>
            <person name="McDougall S."/>
            <person name="Shimer G."/>
            <person name="Goyal A."/>
            <person name="Pietrovski S."/>
            <person name="Church G.M."/>
            <person name="Daniels C.J."/>
            <person name="Mao J.-I."/>
            <person name="Rice P."/>
            <person name="Noelling J."/>
            <person name="Reeve J.N."/>
        </authorList>
    </citation>
    <scope>NUCLEOTIDE SEQUENCE [LARGE SCALE GENOMIC DNA]</scope>
    <source>
        <strain>ATCC 29096 / DSM 1053 / JCM 10044 / NBRC 100330 / Delta H</strain>
    </source>
</reference>
<dbReference type="EC" id="3.5.4.29" evidence="1"/>
<dbReference type="EMBL" id="AE000666">
    <property type="protein sequence ID" value="AAB85513.1"/>
    <property type="molecule type" value="Genomic_DNA"/>
</dbReference>
<dbReference type="PIR" id="F69002">
    <property type="entry name" value="F69002"/>
</dbReference>
<dbReference type="RefSeq" id="WP_010876648.1">
    <property type="nucleotide sequence ID" value="NC_000916.1"/>
</dbReference>
<dbReference type="SMR" id="O27096"/>
<dbReference type="FunCoup" id="O27096">
    <property type="interactions" value="9"/>
</dbReference>
<dbReference type="STRING" id="187420.MTH_1017"/>
<dbReference type="PaxDb" id="187420-MTH_1017"/>
<dbReference type="EnsemblBacteria" id="AAB85513">
    <property type="protein sequence ID" value="AAB85513"/>
    <property type="gene ID" value="MTH_1017"/>
</dbReference>
<dbReference type="KEGG" id="mth:MTH_1017"/>
<dbReference type="PATRIC" id="fig|187420.15.peg.1000"/>
<dbReference type="HOGENOM" id="CLU_080076_0_0_2"/>
<dbReference type="InParanoid" id="O27096"/>
<dbReference type="Proteomes" id="UP000005223">
    <property type="component" value="Chromosome"/>
</dbReference>
<dbReference type="GO" id="GO:0005525">
    <property type="term" value="F:GTP binding"/>
    <property type="evidence" value="ECO:0007669"/>
    <property type="project" value="UniProtKB-KW"/>
</dbReference>
<dbReference type="GO" id="GO:0043740">
    <property type="term" value="F:GTP cyclohydrolase IIa activity"/>
    <property type="evidence" value="ECO:0007669"/>
    <property type="project" value="UniProtKB-EC"/>
</dbReference>
<dbReference type="GO" id="GO:0009058">
    <property type="term" value="P:biosynthetic process"/>
    <property type="evidence" value="ECO:0007669"/>
    <property type="project" value="InterPro"/>
</dbReference>
<dbReference type="Gene3D" id="3.30.70.270">
    <property type="match status" value="1"/>
</dbReference>
<dbReference type="Gene3D" id="3.30.70.1230">
    <property type="entry name" value="Nucleotide cyclase"/>
    <property type="match status" value="1"/>
</dbReference>
<dbReference type="HAMAP" id="MF_00608">
    <property type="entry name" value="GTP_cyclohydro_3"/>
    <property type="match status" value="1"/>
</dbReference>
<dbReference type="InterPro" id="IPR007839">
    <property type="entry name" value="GTP_CycHdrlase_3"/>
</dbReference>
<dbReference type="InterPro" id="IPR029787">
    <property type="entry name" value="Nucleotide_cyclase"/>
</dbReference>
<dbReference type="InterPro" id="IPR043128">
    <property type="entry name" value="Rev_trsase/Diguanyl_cyclase"/>
</dbReference>
<dbReference type="NCBIfam" id="NF002587">
    <property type="entry name" value="PRK02240.1"/>
    <property type="match status" value="1"/>
</dbReference>
<dbReference type="PANTHER" id="PTHR42202">
    <property type="entry name" value="GTP CYCLOHYDROLASE III"/>
    <property type="match status" value="1"/>
</dbReference>
<dbReference type="PANTHER" id="PTHR42202:SF1">
    <property type="entry name" value="GTP CYCLOHYDROLASE III"/>
    <property type="match status" value="1"/>
</dbReference>
<dbReference type="Pfam" id="PF05165">
    <property type="entry name" value="GCH_III"/>
    <property type="match status" value="1"/>
</dbReference>
<dbReference type="PIRSF" id="PIRSF009265">
    <property type="entry name" value="GTP_cyclohydro_3"/>
    <property type="match status" value="1"/>
</dbReference>